<sequence>MLALKISVYSVVFFFLGIFVFGFLASDPSRTPSRKDLED</sequence>
<feature type="chain" id="PRO_0000298303" description="Photosystem II reaction center protein I">
    <location>
        <begin position="1"/>
        <end position="39"/>
    </location>
</feature>
<feature type="transmembrane region" description="Helical" evidence="1">
    <location>
        <begin position="6"/>
        <end position="26"/>
    </location>
</feature>
<dbReference type="EMBL" id="CP000110">
    <property type="protein sequence ID" value="ABB34036.1"/>
    <property type="molecule type" value="Genomic_DNA"/>
</dbReference>
<dbReference type="RefSeq" id="WP_006042333.1">
    <property type="nucleotide sequence ID" value="NC_007516.1"/>
</dbReference>
<dbReference type="SMR" id="Q3AMZ6"/>
<dbReference type="STRING" id="110662.Syncc9605_0260"/>
<dbReference type="KEGG" id="syd:Syncc9605_0260"/>
<dbReference type="eggNOG" id="ENOG5033CII">
    <property type="taxonomic scope" value="Bacteria"/>
</dbReference>
<dbReference type="HOGENOM" id="CLU_212150_0_0_3"/>
<dbReference type="GO" id="GO:0009539">
    <property type="term" value="C:photosystem II reaction center"/>
    <property type="evidence" value="ECO:0007669"/>
    <property type="project" value="InterPro"/>
</dbReference>
<dbReference type="GO" id="GO:0031676">
    <property type="term" value="C:plasma membrane-derived thylakoid membrane"/>
    <property type="evidence" value="ECO:0007669"/>
    <property type="project" value="UniProtKB-SubCell"/>
</dbReference>
<dbReference type="GO" id="GO:0015979">
    <property type="term" value="P:photosynthesis"/>
    <property type="evidence" value="ECO:0007669"/>
    <property type="project" value="UniProtKB-UniRule"/>
</dbReference>
<dbReference type="HAMAP" id="MF_01316">
    <property type="entry name" value="PSII_PsbI"/>
    <property type="match status" value="1"/>
</dbReference>
<dbReference type="InterPro" id="IPR003686">
    <property type="entry name" value="PSII_PsbI"/>
</dbReference>
<dbReference type="InterPro" id="IPR037271">
    <property type="entry name" value="PSII_PsbI_sf"/>
</dbReference>
<dbReference type="NCBIfam" id="NF002735">
    <property type="entry name" value="PRK02655.1"/>
    <property type="match status" value="1"/>
</dbReference>
<dbReference type="PANTHER" id="PTHR35772">
    <property type="entry name" value="PHOTOSYSTEM II REACTION CENTER PROTEIN I"/>
    <property type="match status" value="1"/>
</dbReference>
<dbReference type="PANTHER" id="PTHR35772:SF1">
    <property type="entry name" value="PHOTOSYSTEM II REACTION CENTER PROTEIN I"/>
    <property type="match status" value="1"/>
</dbReference>
<dbReference type="Pfam" id="PF02532">
    <property type="entry name" value="PsbI"/>
    <property type="match status" value="1"/>
</dbReference>
<dbReference type="SUPFAM" id="SSF161041">
    <property type="entry name" value="Photosystem II reaction center protein I, PsbI"/>
    <property type="match status" value="1"/>
</dbReference>
<organism>
    <name type="scientific">Synechococcus sp. (strain CC9605)</name>
    <dbReference type="NCBI Taxonomy" id="110662"/>
    <lineage>
        <taxon>Bacteria</taxon>
        <taxon>Bacillati</taxon>
        <taxon>Cyanobacteriota</taxon>
        <taxon>Cyanophyceae</taxon>
        <taxon>Synechococcales</taxon>
        <taxon>Synechococcaceae</taxon>
        <taxon>Synechococcus</taxon>
    </lineage>
</organism>
<protein>
    <recommendedName>
        <fullName evidence="1">Photosystem II reaction center protein I</fullName>
        <shortName evidence="1">PSII-I</shortName>
    </recommendedName>
    <alternativeName>
        <fullName evidence="1">PSII 4.4 kDa protein</fullName>
    </alternativeName>
</protein>
<gene>
    <name evidence="1" type="primary">psbI</name>
    <name type="ordered locus">Syncc9605_0260</name>
</gene>
<evidence type="ECO:0000255" key="1">
    <source>
        <dbReference type="HAMAP-Rule" id="MF_01316"/>
    </source>
</evidence>
<comment type="function">
    <text evidence="1">One of the components of the core complex of photosystem II (PSII), required for its stability and/or assembly. PSII is a light-driven water:plastoquinone oxidoreductase that uses light energy to abstract electrons from H(2)O, generating O(2) and a proton gradient subsequently used for ATP formation. It consists of a core antenna complex that captures photons, and an electron transfer chain that converts photonic excitation into a charge separation.</text>
</comment>
<comment type="subunit">
    <text evidence="1">PSII is composed of 1 copy each of membrane proteins PsbA, PsbB, PsbC, PsbD, PsbE, PsbF, PsbH, PsbI, PsbJ, PsbK, PsbL, PsbM, PsbT, PsbX, PsbY, PsbZ, Psb30/Ycf12, peripheral proteins PsbO, CyanoQ (PsbQ), PsbU, PsbV and a large number of cofactors. It forms dimeric complexes.</text>
</comment>
<comment type="subcellular location">
    <subcellularLocation>
        <location evidence="1">Cellular thylakoid membrane</location>
        <topology evidence="1">Single-pass membrane protein</topology>
    </subcellularLocation>
</comment>
<comment type="similarity">
    <text evidence="1">Belongs to the PsbI family.</text>
</comment>
<keyword id="KW-0472">Membrane</keyword>
<keyword id="KW-0602">Photosynthesis</keyword>
<keyword id="KW-0604">Photosystem II</keyword>
<keyword id="KW-0674">Reaction center</keyword>
<keyword id="KW-0793">Thylakoid</keyword>
<keyword id="KW-0812">Transmembrane</keyword>
<keyword id="KW-1133">Transmembrane helix</keyword>
<name>PSBI_SYNSC</name>
<proteinExistence type="inferred from homology"/>
<accession>Q3AMZ6</accession>
<reference key="1">
    <citation type="submission" date="2005-07" db="EMBL/GenBank/DDBJ databases">
        <title>Complete sequence of Synechococcus sp. CC9605.</title>
        <authorList>
            <consortium name="US DOE Joint Genome Institute"/>
            <person name="Copeland A."/>
            <person name="Lucas S."/>
            <person name="Lapidus A."/>
            <person name="Barry K."/>
            <person name="Detter J.C."/>
            <person name="Glavina T."/>
            <person name="Hammon N."/>
            <person name="Israni S."/>
            <person name="Pitluck S."/>
            <person name="Schmutz J."/>
            <person name="Martinez M."/>
            <person name="Larimer F."/>
            <person name="Land M."/>
            <person name="Kyrpides N."/>
            <person name="Ivanova N."/>
            <person name="Richardson P."/>
        </authorList>
    </citation>
    <scope>NUCLEOTIDE SEQUENCE [LARGE SCALE GENOMIC DNA]</scope>
    <source>
        <strain>CC9605</strain>
    </source>
</reference>